<sequence length="340" mass="39633">MNCLVCSARAFNRNYGVMSCFACKMFFRRTVFKNMLFNCKYFKNCTIHYKTHPKCRACRFQKCLNIGMKAASKNDRIVSIGNYEDYNFDKLLNDLIVKNDKNYSNFIDFYSLEDPSLKDIIEDRSIMKLVRRTPETLNDVDQWSNMLAYSRISYFLDFNFIRELDSSDKNTLFKYNVSRAGCLALAMCAYSENKPKLTFPNDVDIFPSEMYNLCGSSTAVLNQVSGQVIAKFIELEIRQEEYLLLLLVMFCNASITNNFSHKTKLILSSHQQVYCSALFRYCQLKYSKSAPTRFTELLSVFGIVNKSVNNMSFLSMMVQCYNPKFNFKRLMQDIFSHTLS</sequence>
<evidence type="ECO:0000255" key="1">
    <source>
        <dbReference type="PROSITE-ProRule" id="PRU00407"/>
    </source>
</evidence>
<evidence type="ECO:0000255" key="2">
    <source>
        <dbReference type="PROSITE-ProRule" id="PRU01189"/>
    </source>
</evidence>
<evidence type="ECO:0000305" key="3"/>
<reference key="1">
    <citation type="journal article" date="1998" name="Science">
        <title>Genome sequence of the nematode C. elegans: a platform for investigating biology.</title>
        <authorList>
            <consortium name="The C. elegans sequencing consortium"/>
        </authorList>
    </citation>
    <scope>NUCLEOTIDE SEQUENCE [LARGE SCALE GENOMIC DNA]</scope>
    <source>
        <strain>Bristol N2</strain>
    </source>
</reference>
<gene>
    <name type="primary">nhr-268</name>
    <name type="ORF">K06B4.6</name>
</gene>
<name>NH268_CAEEL</name>
<feature type="chain" id="PRO_0000223608" description="Nuclear hormone receptor family member nhr-268">
    <location>
        <begin position="1"/>
        <end position="340"/>
    </location>
</feature>
<feature type="domain" description="NR LBD" evidence="2">
    <location>
        <begin position="98"/>
        <end position="337"/>
    </location>
</feature>
<feature type="DNA-binding region" description="Nuclear receptor" evidence="1">
    <location>
        <begin position="1"/>
        <end position="75"/>
    </location>
</feature>
<feature type="zinc finger region" description="NR C4-type" evidence="1">
    <location>
        <begin position="3"/>
        <end position="23"/>
    </location>
</feature>
<feature type="zinc finger region" description="NR C4-type" evidence="1">
    <location>
        <begin position="39"/>
        <end position="58"/>
    </location>
</feature>
<organism>
    <name type="scientific">Caenorhabditis elegans</name>
    <dbReference type="NCBI Taxonomy" id="6239"/>
    <lineage>
        <taxon>Eukaryota</taxon>
        <taxon>Metazoa</taxon>
        <taxon>Ecdysozoa</taxon>
        <taxon>Nematoda</taxon>
        <taxon>Chromadorea</taxon>
        <taxon>Rhabditida</taxon>
        <taxon>Rhabditina</taxon>
        <taxon>Rhabditomorpha</taxon>
        <taxon>Rhabditoidea</taxon>
        <taxon>Rhabditidae</taxon>
        <taxon>Peloderinae</taxon>
        <taxon>Caenorhabditis</taxon>
    </lineage>
</organism>
<protein>
    <recommendedName>
        <fullName>Nuclear hormone receptor family member nhr-268</fullName>
    </recommendedName>
</protein>
<comment type="function">
    <text>Orphan nuclear receptor.</text>
</comment>
<comment type="subcellular location">
    <subcellularLocation>
        <location evidence="1">Nucleus</location>
    </subcellularLocation>
</comment>
<comment type="similarity">
    <text evidence="3">Belongs to the nuclear hormone receptor family.</text>
</comment>
<accession>O17930</accession>
<keyword id="KW-0238">DNA-binding</keyword>
<keyword id="KW-0479">Metal-binding</keyword>
<keyword id="KW-0539">Nucleus</keyword>
<keyword id="KW-0675">Receptor</keyword>
<keyword id="KW-1185">Reference proteome</keyword>
<keyword id="KW-0804">Transcription</keyword>
<keyword id="KW-0805">Transcription regulation</keyword>
<keyword id="KW-0862">Zinc</keyword>
<keyword id="KW-0863">Zinc-finger</keyword>
<proteinExistence type="inferred from homology"/>
<dbReference type="EMBL" id="Z83233">
    <property type="protein sequence ID" value="CAB05763.2"/>
    <property type="molecule type" value="Genomic_DNA"/>
</dbReference>
<dbReference type="PIR" id="T23367">
    <property type="entry name" value="T23367"/>
</dbReference>
<dbReference type="RefSeq" id="NP_506902.2">
    <property type="nucleotide sequence ID" value="NM_074501.4"/>
</dbReference>
<dbReference type="SMR" id="O17930"/>
<dbReference type="BioGRID" id="51760">
    <property type="interactions" value="1"/>
</dbReference>
<dbReference type="FunCoup" id="O17930">
    <property type="interactions" value="2"/>
</dbReference>
<dbReference type="IntAct" id="O17930">
    <property type="interactions" value="1"/>
</dbReference>
<dbReference type="STRING" id="6239.K06B4.6.2"/>
<dbReference type="PaxDb" id="6239-K06B4.6.2"/>
<dbReference type="EnsemblMetazoa" id="K06B4.6.1">
    <property type="protein sequence ID" value="K06B4.6.1"/>
    <property type="gene ID" value="WBGene00010601"/>
</dbReference>
<dbReference type="GeneID" id="187054"/>
<dbReference type="KEGG" id="cel:CELE_K06B4.6"/>
<dbReference type="UCSC" id="K06B4.6">
    <property type="organism name" value="c. elegans"/>
</dbReference>
<dbReference type="AGR" id="WB:WBGene00010601"/>
<dbReference type="CTD" id="187054"/>
<dbReference type="WormBase" id="K06B4.6">
    <property type="protein sequence ID" value="CE42553"/>
    <property type="gene ID" value="WBGene00010601"/>
    <property type="gene designation" value="nhr-268"/>
</dbReference>
<dbReference type="GeneTree" id="ENSGT00970000195839"/>
<dbReference type="HOGENOM" id="CLU_007368_3_0_1"/>
<dbReference type="InParanoid" id="O17930"/>
<dbReference type="OrthoDB" id="10018779at2759"/>
<dbReference type="PhylomeDB" id="O17930"/>
<dbReference type="PRO" id="PR:O17930"/>
<dbReference type="Proteomes" id="UP000001940">
    <property type="component" value="Chromosome V"/>
</dbReference>
<dbReference type="GO" id="GO:0005634">
    <property type="term" value="C:nucleus"/>
    <property type="evidence" value="ECO:0007669"/>
    <property type="project" value="UniProtKB-SubCell"/>
</dbReference>
<dbReference type="GO" id="GO:0003700">
    <property type="term" value="F:DNA-binding transcription factor activity"/>
    <property type="evidence" value="ECO:0007669"/>
    <property type="project" value="InterPro"/>
</dbReference>
<dbReference type="GO" id="GO:0000978">
    <property type="term" value="F:RNA polymerase II cis-regulatory region sequence-specific DNA binding"/>
    <property type="evidence" value="ECO:0007669"/>
    <property type="project" value="InterPro"/>
</dbReference>
<dbReference type="GO" id="GO:0008270">
    <property type="term" value="F:zinc ion binding"/>
    <property type="evidence" value="ECO:0007669"/>
    <property type="project" value="UniProtKB-KW"/>
</dbReference>
<dbReference type="CDD" id="cd06960">
    <property type="entry name" value="NR_DBD_HNF4A"/>
    <property type="match status" value="1"/>
</dbReference>
<dbReference type="Gene3D" id="3.30.50.10">
    <property type="entry name" value="Erythroid Transcription Factor GATA-1, subunit A"/>
    <property type="match status" value="1"/>
</dbReference>
<dbReference type="Gene3D" id="1.10.565.10">
    <property type="entry name" value="Retinoid X Receptor"/>
    <property type="match status" value="1"/>
</dbReference>
<dbReference type="InterPro" id="IPR049636">
    <property type="entry name" value="HNF4-like_DBD"/>
</dbReference>
<dbReference type="InterPro" id="IPR035500">
    <property type="entry name" value="NHR-like_dom_sf"/>
</dbReference>
<dbReference type="InterPro" id="IPR000536">
    <property type="entry name" value="Nucl_hrmn_rcpt_lig-bd"/>
</dbReference>
<dbReference type="InterPro" id="IPR001628">
    <property type="entry name" value="Znf_hrmn_rcpt"/>
</dbReference>
<dbReference type="InterPro" id="IPR013088">
    <property type="entry name" value="Znf_NHR/GATA"/>
</dbReference>
<dbReference type="PANTHER" id="PTHR45886:SF2">
    <property type="entry name" value="NUCLEAR HORMONE RECEPTOR FAMILY-RELATED"/>
    <property type="match status" value="1"/>
</dbReference>
<dbReference type="PANTHER" id="PTHR45886">
    <property type="entry name" value="NUCLEAR HORMONE RECEPTOR FAMILY-RELATED-RELATED"/>
    <property type="match status" value="1"/>
</dbReference>
<dbReference type="Pfam" id="PF00104">
    <property type="entry name" value="Hormone_recep"/>
    <property type="match status" value="1"/>
</dbReference>
<dbReference type="Pfam" id="PF00105">
    <property type="entry name" value="zf-C4"/>
    <property type="match status" value="1"/>
</dbReference>
<dbReference type="PRINTS" id="PR00047">
    <property type="entry name" value="STROIDFINGER"/>
</dbReference>
<dbReference type="SMART" id="SM00430">
    <property type="entry name" value="HOLI"/>
    <property type="match status" value="1"/>
</dbReference>
<dbReference type="SMART" id="SM00399">
    <property type="entry name" value="ZnF_C4"/>
    <property type="match status" value="1"/>
</dbReference>
<dbReference type="SUPFAM" id="SSF57716">
    <property type="entry name" value="Glucocorticoid receptor-like (DNA-binding domain)"/>
    <property type="match status" value="1"/>
</dbReference>
<dbReference type="SUPFAM" id="SSF48508">
    <property type="entry name" value="Nuclear receptor ligand-binding domain"/>
    <property type="match status" value="1"/>
</dbReference>
<dbReference type="PROSITE" id="PS51843">
    <property type="entry name" value="NR_LBD"/>
    <property type="match status" value="1"/>
</dbReference>
<dbReference type="PROSITE" id="PS00031">
    <property type="entry name" value="NUCLEAR_REC_DBD_1"/>
    <property type="match status" value="1"/>
</dbReference>
<dbReference type="PROSITE" id="PS51030">
    <property type="entry name" value="NUCLEAR_REC_DBD_2"/>
    <property type="match status" value="1"/>
</dbReference>